<comment type="caution">
    <text evidence="1">The order of the peptides shown is unknown.</text>
</comment>
<sequence>SRGFGFVTFGDEKGFGFVTFGDEKDAIEGMNGQDLDGRNITVNEAQSR</sequence>
<feature type="chain" id="PRO_0000305588" description="Glycine-rich RNA-binding protein 3">
    <location>
        <begin position="1" status="less than"/>
        <end position="48" status="greater than"/>
    </location>
</feature>
<feature type="non-consecutive residues" evidence="2">
    <location>
        <begin position="13"/>
        <end position="14"/>
    </location>
</feature>
<feature type="non-consecutive residues" evidence="2">
    <location>
        <begin position="24"/>
        <end position="25"/>
    </location>
</feature>
<feature type="non-terminal residue" evidence="2">
    <location>
        <position position="1"/>
    </location>
</feature>
<feature type="non-terminal residue" evidence="2">
    <location>
        <position position="48"/>
    </location>
</feature>
<keyword id="KW-0903">Direct protein sequencing</keyword>
<keyword id="KW-1185">Reference proteome</keyword>
<keyword id="KW-0694">RNA-binding</keyword>
<accession>P84977</accession>
<dbReference type="SMR" id="P84977"/>
<dbReference type="Proteomes" id="UP000694918">
    <property type="component" value="Unplaced"/>
</dbReference>
<dbReference type="GO" id="GO:0003723">
    <property type="term" value="F:RNA binding"/>
    <property type="evidence" value="ECO:0007669"/>
    <property type="project" value="UniProtKB-KW"/>
</dbReference>
<dbReference type="Gene3D" id="3.30.70.330">
    <property type="match status" value="1"/>
</dbReference>
<dbReference type="InterPro" id="IPR012677">
    <property type="entry name" value="Nucleotide-bd_a/b_plait_sf"/>
</dbReference>
<dbReference type="InterPro" id="IPR035979">
    <property type="entry name" value="RBD_domain_sf"/>
</dbReference>
<dbReference type="InterPro" id="IPR051106">
    <property type="entry name" value="RNA-bind/splicing_reg"/>
</dbReference>
<dbReference type="InterPro" id="IPR000504">
    <property type="entry name" value="RRM_dom"/>
</dbReference>
<dbReference type="PANTHER" id="PTHR48028">
    <property type="entry name" value="GLYCINE-RICH RNA-BINDING PROTEIN RZ1A"/>
    <property type="match status" value="1"/>
</dbReference>
<dbReference type="PANTHER" id="PTHR48028:SF2">
    <property type="entry name" value="GLYCINE-RICH RNA-BINDING PROTEIN RZ1A"/>
    <property type="match status" value="1"/>
</dbReference>
<dbReference type="Pfam" id="PF00076">
    <property type="entry name" value="RRM_1"/>
    <property type="match status" value="1"/>
</dbReference>
<dbReference type="SUPFAM" id="SSF54928">
    <property type="entry name" value="RNA-binding domain, RBD"/>
    <property type="match status" value="1"/>
</dbReference>
<dbReference type="PROSITE" id="PS50102">
    <property type="entry name" value="RRM"/>
    <property type="match status" value="1"/>
</dbReference>
<name>GRP3_POPEU</name>
<reference evidence="3" key="1">
    <citation type="thesis" date="2006" institute="ICAT-FCUL" country="Portugal">
        <title>Molecular analysis of Populus euphratica Oliv. response of moderate heat stress.</title>
        <authorList>
            <person name="Ferreira S."/>
        </authorList>
    </citation>
    <scope>PROTEIN SEQUENCE</scope>
    <source>
        <tissue evidence="1">Leaf</tissue>
    </source>
</reference>
<organism>
    <name type="scientific">Populus euphratica</name>
    <name type="common">Euphrates poplar</name>
    <dbReference type="NCBI Taxonomy" id="75702"/>
    <lineage>
        <taxon>Eukaryota</taxon>
        <taxon>Viridiplantae</taxon>
        <taxon>Streptophyta</taxon>
        <taxon>Embryophyta</taxon>
        <taxon>Tracheophyta</taxon>
        <taxon>Spermatophyta</taxon>
        <taxon>Magnoliopsida</taxon>
        <taxon>eudicotyledons</taxon>
        <taxon>Gunneridae</taxon>
        <taxon>Pentapetalae</taxon>
        <taxon>rosids</taxon>
        <taxon>fabids</taxon>
        <taxon>Malpighiales</taxon>
        <taxon>Salicaceae</taxon>
        <taxon>Saliceae</taxon>
        <taxon>Populus</taxon>
    </lineage>
</organism>
<proteinExistence type="evidence at protein level"/>
<protein>
    <recommendedName>
        <fullName>Glycine-rich RNA-binding protein 3</fullName>
    </recommendedName>
</protein>
<evidence type="ECO:0000269" key="1">
    <source ref="1"/>
</evidence>
<evidence type="ECO:0000303" key="2">
    <source ref="1"/>
</evidence>
<evidence type="ECO:0000305" key="3"/>